<organism>
    <name type="scientific">Flavobacterium psychrophilum (strain ATCC 49511 / DSM 21280 / CIP 103535 / JIP02/86)</name>
    <dbReference type="NCBI Taxonomy" id="402612"/>
    <lineage>
        <taxon>Bacteria</taxon>
        <taxon>Pseudomonadati</taxon>
        <taxon>Bacteroidota</taxon>
        <taxon>Flavobacteriia</taxon>
        <taxon>Flavobacteriales</taxon>
        <taxon>Flavobacteriaceae</taxon>
        <taxon>Flavobacterium</taxon>
    </lineage>
</organism>
<accession>A6GYV0</accession>
<proteinExistence type="inferred from homology"/>
<feature type="chain" id="PRO_1000005117" description="Small ribosomal subunit protein bS21">
    <location>
        <begin position="1"/>
        <end position="65"/>
    </location>
</feature>
<evidence type="ECO:0000255" key="1">
    <source>
        <dbReference type="HAMAP-Rule" id="MF_00358"/>
    </source>
</evidence>
<evidence type="ECO:0000305" key="2"/>
<sequence>MLIIPIKDGENIDRALKRYKRKFDKTGVVRQLRKRQAFIKPSVINRAMIQKAAYVQNMREGLENM</sequence>
<reference key="1">
    <citation type="journal article" date="2007" name="Nat. Biotechnol.">
        <title>Complete genome sequence of the fish pathogen Flavobacterium psychrophilum.</title>
        <authorList>
            <person name="Duchaud E."/>
            <person name="Boussaha M."/>
            <person name="Loux V."/>
            <person name="Bernardet J.-F."/>
            <person name="Michel C."/>
            <person name="Kerouault B."/>
            <person name="Mondot S."/>
            <person name="Nicolas P."/>
            <person name="Bossy R."/>
            <person name="Caron C."/>
            <person name="Bessieres P."/>
            <person name="Gibrat J.-F."/>
            <person name="Claverol S."/>
            <person name="Dumetz F."/>
            <person name="Le Henaff M."/>
            <person name="Benmansour A."/>
        </authorList>
    </citation>
    <scope>NUCLEOTIDE SEQUENCE [LARGE SCALE GENOMIC DNA]</scope>
    <source>
        <strain>ATCC 49511 / DSM 21280 / CIP 103535 / JIP02/86</strain>
    </source>
</reference>
<protein>
    <recommendedName>
        <fullName evidence="1">Small ribosomal subunit protein bS21</fullName>
    </recommendedName>
    <alternativeName>
        <fullName evidence="2">30S ribosomal protein S21</fullName>
    </alternativeName>
</protein>
<comment type="similarity">
    <text evidence="1">Belongs to the bacterial ribosomal protein bS21 family.</text>
</comment>
<keyword id="KW-1185">Reference proteome</keyword>
<keyword id="KW-0687">Ribonucleoprotein</keyword>
<keyword id="KW-0689">Ribosomal protein</keyword>
<dbReference type="EMBL" id="AM398681">
    <property type="protein sequence ID" value="CAL43273.1"/>
    <property type="molecule type" value="Genomic_DNA"/>
</dbReference>
<dbReference type="RefSeq" id="WP_011963322.1">
    <property type="nucleotide sequence ID" value="NC_009613.3"/>
</dbReference>
<dbReference type="RefSeq" id="YP_001296084.1">
    <property type="nucleotide sequence ID" value="NC_009613.3"/>
</dbReference>
<dbReference type="SMR" id="A6GYV0"/>
<dbReference type="STRING" id="402612.FP1190"/>
<dbReference type="EnsemblBacteria" id="CAL43273">
    <property type="protein sequence ID" value="CAL43273"/>
    <property type="gene ID" value="FP1190"/>
</dbReference>
<dbReference type="GeneID" id="66553094"/>
<dbReference type="KEGG" id="fps:FP1190"/>
<dbReference type="PATRIC" id="fig|402612.5.peg.1204"/>
<dbReference type="eggNOG" id="COG0828">
    <property type="taxonomic scope" value="Bacteria"/>
</dbReference>
<dbReference type="HOGENOM" id="CLU_159258_2_0_10"/>
<dbReference type="OrthoDB" id="598353at2"/>
<dbReference type="Proteomes" id="UP000006394">
    <property type="component" value="Chromosome"/>
</dbReference>
<dbReference type="GO" id="GO:1990904">
    <property type="term" value="C:ribonucleoprotein complex"/>
    <property type="evidence" value="ECO:0007669"/>
    <property type="project" value="UniProtKB-KW"/>
</dbReference>
<dbReference type="GO" id="GO:0005840">
    <property type="term" value="C:ribosome"/>
    <property type="evidence" value="ECO:0007669"/>
    <property type="project" value="UniProtKB-KW"/>
</dbReference>
<dbReference type="GO" id="GO:0003735">
    <property type="term" value="F:structural constituent of ribosome"/>
    <property type="evidence" value="ECO:0007669"/>
    <property type="project" value="InterPro"/>
</dbReference>
<dbReference type="GO" id="GO:0006412">
    <property type="term" value="P:translation"/>
    <property type="evidence" value="ECO:0007669"/>
    <property type="project" value="UniProtKB-UniRule"/>
</dbReference>
<dbReference type="Gene3D" id="1.20.5.1150">
    <property type="entry name" value="Ribosomal protein S8"/>
    <property type="match status" value="1"/>
</dbReference>
<dbReference type="HAMAP" id="MF_00358">
    <property type="entry name" value="Ribosomal_bS21"/>
    <property type="match status" value="1"/>
</dbReference>
<dbReference type="InterPro" id="IPR001911">
    <property type="entry name" value="Ribosomal_bS21"/>
</dbReference>
<dbReference type="InterPro" id="IPR038380">
    <property type="entry name" value="Ribosomal_bS21_sf"/>
</dbReference>
<dbReference type="NCBIfam" id="TIGR00030">
    <property type="entry name" value="S21p"/>
    <property type="match status" value="1"/>
</dbReference>
<dbReference type="Pfam" id="PF01165">
    <property type="entry name" value="Ribosomal_S21"/>
    <property type="match status" value="1"/>
</dbReference>
<dbReference type="PRINTS" id="PR00976">
    <property type="entry name" value="RIBOSOMALS21"/>
</dbReference>
<name>RS21_FLAPJ</name>
<gene>
    <name evidence="1" type="primary">rpsU</name>
    <name type="ordered locus">FP1190</name>
</gene>